<sequence length="215" mass="23045">MTTDYKSPLRVGIGGPVGSGKTALLEKLCKAMRDDYHIAVVTNDIYTKEDQRILTEAQALEPERIVGVETGGCPHTAIREDASMNLAAVENLARKFGNLDVVFVESGGDNLSATFSPELADLTIYVIDVASGEKIPRKGGPGITKSDLLVINKIDLAPMVGADLGIMASDTNRMRGQKPWAFSNLRNDVEGLEKIIGFVVEEGMLVSHSEKAVSG</sequence>
<proteinExistence type="inferred from homology"/>
<accession>Q0VKY5</accession>
<dbReference type="EMBL" id="AM286690">
    <property type="protein sequence ID" value="CAL18163.1"/>
    <property type="molecule type" value="Genomic_DNA"/>
</dbReference>
<dbReference type="RefSeq" id="WP_011589986.1">
    <property type="nucleotide sequence ID" value="NC_008260.1"/>
</dbReference>
<dbReference type="SMR" id="Q0VKY5"/>
<dbReference type="STRING" id="393595.ABO_2715"/>
<dbReference type="KEGG" id="abo:ABO_2715"/>
<dbReference type="eggNOG" id="COG0378">
    <property type="taxonomic scope" value="Bacteria"/>
</dbReference>
<dbReference type="HOGENOM" id="CLU_072144_1_0_6"/>
<dbReference type="OrthoDB" id="9802035at2"/>
<dbReference type="Proteomes" id="UP000008871">
    <property type="component" value="Chromosome"/>
</dbReference>
<dbReference type="GO" id="GO:0005737">
    <property type="term" value="C:cytoplasm"/>
    <property type="evidence" value="ECO:0007669"/>
    <property type="project" value="UniProtKB-SubCell"/>
</dbReference>
<dbReference type="GO" id="GO:0005525">
    <property type="term" value="F:GTP binding"/>
    <property type="evidence" value="ECO:0007669"/>
    <property type="project" value="UniProtKB-KW"/>
</dbReference>
<dbReference type="GO" id="GO:0003924">
    <property type="term" value="F:GTPase activity"/>
    <property type="evidence" value="ECO:0007669"/>
    <property type="project" value="InterPro"/>
</dbReference>
<dbReference type="GO" id="GO:0016151">
    <property type="term" value="F:nickel cation binding"/>
    <property type="evidence" value="ECO:0007669"/>
    <property type="project" value="UniProtKB-UniRule"/>
</dbReference>
<dbReference type="GO" id="GO:0043419">
    <property type="term" value="P:urea catabolic process"/>
    <property type="evidence" value="ECO:0007669"/>
    <property type="project" value="InterPro"/>
</dbReference>
<dbReference type="CDD" id="cd05540">
    <property type="entry name" value="UreG"/>
    <property type="match status" value="1"/>
</dbReference>
<dbReference type="FunFam" id="3.40.50.300:FF:000208">
    <property type="entry name" value="Urease accessory protein UreG"/>
    <property type="match status" value="1"/>
</dbReference>
<dbReference type="Gene3D" id="3.40.50.300">
    <property type="entry name" value="P-loop containing nucleotide triphosphate hydrolases"/>
    <property type="match status" value="1"/>
</dbReference>
<dbReference type="HAMAP" id="MF_01389">
    <property type="entry name" value="UreG"/>
    <property type="match status" value="1"/>
</dbReference>
<dbReference type="InterPro" id="IPR003495">
    <property type="entry name" value="CobW/HypB/UreG_nucleotide-bd"/>
</dbReference>
<dbReference type="InterPro" id="IPR027417">
    <property type="entry name" value="P-loop_NTPase"/>
</dbReference>
<dbReference type="InterPro" id="IPR004400">
    <property type="entry name" value="UreG"/>
</dbReference>
<dbReference type="NCBIfam" id="TIGR00101">
    <property type="entry name" value="ureG"/>
    <property type="match status" value="1"/>
</dbReference>
<dbReference type="PANTHER" id="PTHR31715">
    <property type="entry name" value="UREASE ACCESSORY PROTEIN G"/>
    <property type="match status" value="1"/>
</dbReference>
<dbReference type="PANTHER" id="PTHR31715:SF0">
    <property type="entry name" value="UREASE ACCESSORY PROTEIN G"/>
    <property type="match status" value="1"/>
</dbReference>
<dbReference type="Pfam" id="PF02492">
    <property type="entry name" value="cobW"/>
    <property type="match status" value="1"/>
</dbReference>
<dbReference type="PIRSF" id="PIRSF005624">
    <property type="entry name" value="Ni-bind_GTPase"/>
    <property type="match status" value="1"/>
</dbReference>
<dbReference type="SUPFAM" id="SSF52540">
    <property type="entry name" value="P-loop containing nucleoside triphosphate hydrolases"/>
    <property type="match status" value="1"/>
</dbReference>
<keyword id="KW-0143">Chaperone</keyword>
<keyword id="KW-0963">Cytoplasm</keyword>
<keyword id="KW-0342">GTP-binding</keyword>
<keyword id="KW-0996">Nickel insertion</keyword>
<keyword id="KW-0547">Nucleotide-binding</keyword>
<keyword id="KW-1185">Reference proteome</keyword>
<name>UREG_ALCBS</name>
<gene>
    <name evidence="1" type="primary">ureG</name>
    <name type="ordered locus">ABO_2715</name>
</gene>
<feature type="chain" id="PRO_0000347343" description="Urease accessory protein UreG">
    <location>
        <begin position="1"/>
        <end position="215"/>
    </location>
</feature>
<feature type="binding site" evidence="1">
    <location>
        <begin position="15"/>
        <end position="22"/>
    </location>
    <ligand>
        <name>GTP</name>
        <dbReference type="ChEBI" id="CHEBI:37565"/>
    </ligand>
</feature>
<organism>
    <name type="scientific">Alcanivorax borkumensis (strain ATCC 700651 / DSM 11573 / NCIMB 13689 / SK2)</name>
    <dbReference type="NCBI Taxonomy" id="393595"/>
    <lineage>
        <taxon>Bacteria</taxon>
        <taxon>Pseudomonadati</taxon>
        <taxon>Pseudomonadota</taxon>
        <taxon>Gammaproteobacteria</taxon>
        <taxon>Oceanospirillales</taxon>
        <taxon>Alcanivoracaceae</taxon>
        <taxon>Alcanivorax</taxon>
    </lineage>
</organism>
<reference key="1">
    <citation type="journal article" date="2006" name="Nat. Biotechnol.">
        <title>Genome sequence of the ubiquitous hydrocarbon-degrading marine bacterium Alcanivorax borkumensis.</title>
        <authorList>
            <person name="Schneiker S."/>
            <person name="Martins dos Santos V.A.P."/>
            <person name="Bartels D."/>
            <person name="Bekel T."/>
            <person name="Brecht M."/>
            <person name="Buhrmester J."/>
            <person name="Chernikova T.N."/>
            <person name="Denaro R."/>
            <person name="Ferrer M."/>
            <person name="Gertler C."/>
            <person name="Goesmann A."/>
            <person name="Golyshina O.V."/>
            <person name="Kaminski F."/>
            <person name="Khachane A.N."/>
            <person name="Lang S."/>
            <person name="Linke B."/>
            <person name="McHardy A.C."/>
            <person name="Meyer F."/>
            <person name="Nechitaylo T."/>
            <person name="Puehler A."/>
            <person name="Regenhardt D."/>
            <person name="Rupp O."/>
            <person name="Sabirova J.S."/>
            <person name="Selbitschka W."/>
            <person name="Yakimov M.M."/>
            <person name="Timmis K.N."/>
            <person name="Vorhoelter F.-J."/>
            <person name="Weidner S."/>
            <person name="Kaiser O."/>
            <person name="Golyshin P.N."/>
        </authorList>
    </citation>
    <scope>NUCLEOTIDE SEQUENCE [LARGE SCALE GENOMIC DNA]</scope>
    <source>
        <strain>ATCC 700651 / DSM 11573 / NCIMB 13689 / SK2</strain>
    </source>
</reference>
<comment type="function">
    <text evidence="1">Facilitates the functional incorporation of the urease nickel metallocenter. This process requires GTP hydrolysis, probably effectuated by UreG.</text>
</comment>
<comment type="subunit">
    <text evidence="1">Homodimer. UreD, UreF and UreG form a complex that acts as a GTP-hydrolysis-dependent molecular chaperone, activating the urease apoprotein by helping to assemble the nickel containing metallocenter of UreC. The UreE protein probably delivers the nickel.</text>
</comment>
<comment type="subcellular location">
    <subcellularLocation>
        <location evidence="1">Cytoplasm</location>
    </subcellularLocation>
</comment>
<comment type="similarity">
    <text evidence="1">Belongs to the SIMIBI class G3E GTPase family. UreG subfamily.</text>
</comment>
<protein>
    <recommendedName>
        <fullName evidence="1">Urease accessory protein UreG</fullName>
    </recommendedName>
</protein>
<evidence type="ECO:0000255" key="1">
    <source>
        <dbReference type="HAMAP-Rule" id="MF_01389"/>
    </source>
</evidence>